<reference key="1">
    <citation type="journal article" date="2004" name="Nature">
        <title>Genome sequence of the Brown Norway rat yields insights into mammalian evolution.</title>
        <authorList>
            <person name="Gibbs R.A."/>
            <person name="Weinstock G.M."/>
            <person name="Metzker M.L."/>
            <person name="Muzny D.M."/>
            <person name="Sodergren E.J."/>
            <person name="Scherer S."/>
            <person name="Scott G."/>
            <person name="Steffen D."/>
            <person name="Worley K.C."/>
            <person name="Burch P.E."/>
            <person name="Okwuonu G."/>
            <person name="Hines S."/>
            <person name="Lewis L."/>
            <person name="Deramo C."/>
            <person name="Delgado O."/>
            <person name="Dugan-Rocha S."/>
            <person name="Miner G."/>
            <person name="Morgan M."/>
            <person name="Hawes A."/>
            <person name="Gill R."/>
            <person name="Holt R.A."/>
            <person name="Adams M.D."/>
            <person name="Amanatides P.G."/>
            <person name="Baden-Tillson H."/>
            <person name="Barnstead M."/>
            <person name="Chin S."/>
            <person name="Evans C.A."/>
            <person name="Ferriera S."/>
            <person name="Fosler C."/>
            <person name="Glodek A."/>
            <person name="Gu Z."/>
            <person name="Jennings D."/>
            <person name="Kraft C.L."/>
            <person name="Nguyen T."/>
            <person name="Pfannkoch C.M."/>
            <person name="Sitter C."/>
            <person name="Sutton G.G."/>
            <person name="Venter J.C."/>
            <person name="Woodage T."/>
            <person name="Smith D."/>
            <person name="Lee H.-M."/>
            <person name="Gustafson E."/>
            <person name="Cahill P."/>
            <person name="Kana A."/>
            <person name="Doucette-Stamm L."/>
            <person name="Weinstock K."/>
            <person name="Fechtel K."/>
            <person name="Weiss R.B."/>
            <person name="Dunn D.M."/>
            <person name="Green E.D."/>
            <person name="Blakesley R.W."/>
            <person name="Bouffard G.G."/>
            <person name="De Jong P.J."/>
            <person name="Osoegawa K."/>
            <person name="Zhu B."/>
            <person name="Marra M."/>
            <person name="Schein J."/>
            <person name="Bosdet I."/>
            <person name="Fjell C."/>
            <person name="Jones S."/>
            <person name="Krzywinski M."/>
            <person name="Mathewson C."/>
            <person name="Siddiqui A."/>
            <person name="Wye N."/>
            <person name="McPherson J."/>
            <person name="Zhao S."/>
            <person name="Fraser C.M."/>
            <person name="Shetty J."/>
            <person name="Shatsman S."/>
            <person name="Geer K."/>
            <person name="Chen Y."/>
            <person name="Abramzon S."/>
            <person name="Nierman W.C."/>
            <person name="Havlak P.H."/>
            <person name="Chen R."/>
            <person name="Durbin K.J."/>
            <person name="Egan A."/>
            <person name="Ren Y."/>
            <person name="Song X.-Z."/>
            <person name="Li B."/>
            <person name="Liu Y."/>
            <person name="Qin X."/>
            <person name="Cawley S."/>
            <person name="Cooney A.J."/>
            <person name="D'Souza L.M."/>
            <person name="Martin K."/>
            <person name="Wu J.Q."/>
            <person name="Gonzalez-Garay M.L."/>
            <person name="Jackson A.R."/>
            <person name="Kalafus K.J."/>
            <person name="McLeod M.P."/>
            <person name="Milosavljevic A."/>
            <person name="Virk D."/>
            <person name="Volkov A."/>
            <person name="Wheeler D.A."/>
            <person name="Zhang Z."/>
            <person name="Bailey J.A."/>
            <person name="Eichler E.E."/>
            <person name="Tuzun E."/>
            <person name="Birney E."/>
            <person name="Mongin E."/>
            <person name="Ureta-Vidal A."/>
            <person name="Woodwark C."/>
            <person name="Zdobnov E."/>
            <person name="Bork P."/>
            <person name="Suyama M."/>
            <person name="Torrents D."/>
            <person name="Alexandersson M."/>
            <person name="Trask B.J."/>
            <person name="Young J.M."/>
            <person name="Huang H."/>
            <person name="Wang H."/>
            <person name="Xing H."/>
            <person name="Daniels S."/>
            <person name="Gietzen D."/>
            <person name="Schmidt J."/>
            <person name="Stevens K."/>
            <person name="Vitt U."/>
            <person name="Wingrove J."/>
            <person name="Camara F."/>
            <person name="Mar Alba M."/>
            <person name="Abril J.F."/>
            <person name="Guigo R."/>
            <person name="Smit A."/>
            <person name="Dubchak I."/>
            <person name="Rubin E.M."/>
            <person name="Couronne O."/>
            <person name="Poliakov A."/>
            <person name="Huebner N."/>
            <person name="Ganten D."/>
            <person name="Goesele C."/>
            <person name="Hummel O."/>
            <person name="Kreitler T."/>
            <person name="Lee Y.-A."/>
            <person name="Monti J."/>
            <person name="Schulz H."/>
            <person name="Zimdahl H."/>
            <person name="Himmelbauer H."/>
            <person name="Lehrach H."/>
            <person name="Jacob H.J."/>
            <person name="Bromberg S."/>
            <person name="Gullings-Handley J."/>
            <person name="Jensen-Seaman M.I."/>
            <person name="Kwitek A.E."/>
            <person name="Lazar J."/>
            <person name="Pasko D."/>
            <person name="Tonellato P.J."/>
            <person name="Twigger S."/>
            <person name="Ponting C.P."/>
            <person name="Duarte J.M."/>
            <person name="Rice S."/>
            <person name="Goodstadt L."/>
            <person name="Beatson S.A."/>
            <person name="Emes R.D."/>
            <person name="Winter E.E."/>
            <person name="Webber C."/>
            <person name="Brandt P."/>
            <person name="Nyakatura G."/>
            <person name="Adetobi M."/>
            <person name="Chiaromonte F."/>
            <person name="Elnitski L."/>
            <person name="Eswara P."/>
            <person name="Hardison R.C."/>
            <person name="Hou M."/>
            <person name="Kolbe D."/>
            <person name="Makova K."/>
            <person name="Miller W."/>
            <person name="Nekrutenko A."/>
            <person name="Riemer C."/>
            <person name="Schwartz S."/>
            <person name="Taylor J."/>
            <person name="Yang S."/>
            <person name="Zhang Y."/>
            <person name="Lindpaintner K."/>
            <person name="Andrews T.D."/>
            <person name="Caccamo M."/>
            <person name="Clamp M."/>
            <person name="Clarke L."/>
            <person name="Curwen V."/>
            <person name="Durbin R.M."/>
            <person name="Eyras E."/>
            <person name="Searle S.M."/>
            <person name="Cooper G.M."/>
            <person name="Batzoglou S."/>
            <person name="Brudno M."/>
            <person name="Sidow A."/>
            <person name="Stone E.A."/>
            <person name="Payseur B.A."/>
            <person name="Bourque G."/>
            <person name="Lopez-Otin C."/>
            <person name="Puente X.S."/>
            <person name="Chakrabarti K."/>
            <person name="Chatterji S."/>
            <person name="Dewey C."/>
            <person name="Pachter L."/>
            <person name="Bray N."/>
            <person name="Yap V.B."/>
            <person name="Caspi A."/>
            <person name="Tesler G."/>
            <person name="Pevzner P.A."/>
            <person name="Haussler D."/>
            <person name="Roskin K.M."/>
            <person name="Baertsch R."/>
            <person name="Clawson H."/>
            <person name="Furey T.S."/>
            <person name="Hinrichs A.S."/>
            <person name="Karolchik D."/>
            <person name="Kent W.J."/>
            <person name="Rosenbloom K.R."/>
            <person name="Trumbower H."/>
            <person name="Weirauch M."/>
            <person name="Cooper D.N."/>
            <person name="Stenson P.D."/>
            <person name="Ma B."/>
            <person name="Brent M."/>
            <person name="Arumugam M."/>
            <person name="Shteynberg D."/>
            <person name="Copley R.R."/>
            <person name="Taylor M.S."/>
            <person name="Riethman H."/>
            <person name="Mudunuri U."/>
            <person name="Peterson J."/>
            <person name="Guyer M."/>
            <person name="Felsenfeld A."/>
            <person name="Old S."/>
            <person name="Mockrin S."/>
            <person name="Collins F.S."/>
        </authorList>
    </citation>
    <scope>NUCLEOTIDE SEQUENCE [LARGE SCALE GENOMIC DNA]</scope>
    <source>
        <strain>Brown Norway</strain>
    </source>
</reference>
<reference key="2">
    <citation type="submission" date="2000-05" db="EMBL/GenBank/DDBJ databases">
        <title>Rat genome project: generation of a rat EST (REST) catalog &amp; rat gene index.</title>
        <authorList>
            <person name="Lee N.H."/>
            <person name="Glodek A."/>
            <person name="Chandra I."/>
            <person name="Mason T.M."/>
            <person name="Quackenbush J."/>
            <person name="Kerlavage A.R."/>
            <person name="Adams M.D."/>
        </authorList>
    </citation>
    <scope>NUCLEOTIDE SEQUENCE [MRNA] OF 1-177</scope>
</reference>
<proteinExistence type="evidence at transcript level"/>
<evidence type="ECO:0000250" key="1">
    <source>
        <dbReference type="UniProtKB" id="Q68J44"/>
    </source>
</evidence>
<evidence type="ECO:0000250" key="2">
    <source>
        <dbReference type="UniProtKB" id="Q8BK84"/>
    </source>
</evidence>
<evidence type="ECO:0000255" key="3">
    <source>
        <dbReference type="PROSITE-ProRule" id="PRU00160"/>
    </source>
</evidence>
<evidence type="ECO:0000305" key="4"/>
<name>DUS29_RAT</name>
<protein>
    <recommendedName>
        <fullName>Dual specificity phosphatase 29</fullName>
    </recommendedName>
    <alternativeName>
        <fullName>Dual specificity phosphatase DUPD1</fullName>
        <ecNumber evidence="1">3.1.3.16</ecNumber>
        <ecNumber evidence="1">3.1.3.48</ecNumber>
    </alternativeName>
</protein>
<gene>
    <name type="primary">Dusp29</name>
    <name type="synonym">Dupd1</name>
</gene>
<accession>P0C595</accession>
<feature type="chain" id="PRO_0000295881" description="Dual specificity phosphatase 29">
    <location>
        <begin position="1"/>
        <end position="215"/>
    </location>
</feature>
<feature type="domain" description="Tyrosine-protein phosphatase" evidence="3">
    <location>
        <begin position="53"/>
        <end position="201"/>
    </location>
</feature>
<feature type="active site" description="Phosphocysteine intermediate" evidence="3">
    <location>
        <position position="146"/>
    </location>
</feature>
<feature type="binding site" evidence="1">
    <location>
        <begin position="145"/>
        <end position="152"/>
    </location>
    <ligand>
        <name>substrate</name>
    </ligand>
</feature>
<keyword id="KW-0963">Cytoplasm</keyword>
<keyword id="KW-0378">Hydrolase</keyword>
<keyword id="KW-0539">Nucleus</keyword>
<keyword id="KW-0904">Protein phosphatase</keyword>
<keyword id="KW-1185">Reference proteome</keyword>
<organism>
    <name type="scientific">Rattus norvegicus</name>
    <name type="common">Rat</name>
    <dbReference type="NCBI Taxonomy" id="10116"/>
    <lineage>
        <taxon>Eukaryota</taxon>
        <taxon>Metazoa</taxon>
        <taxon>Chordata</taxon>
        <taxon>Craniata</taxon>
        <taxon>Vertebrata</taxon>
        <taxon>Euteleostomi</taxon>
        <taxon>Mammalia</taxon>
        <taxon>Eutheria</taxon>
        <taxon>Euarchontoglires</taxon>
        <taxon>Glires</taxon>
        <taxon>Rodentia</taxon>
        <taxon>Myomorpha</taxon>
        <taxon>Muroidea</taxon>
        <taxon>Muridae</taxon>
        <taxon>Murinae</taxon>
        <taxon>Rattus</taxon>
    </lineage>
</organism>
<dbReference type="EC" id="3.1.3.16" evidence="1"/>
<dbReference type="EC" id="3.1.3.48" evidence="1"/>
<dbReference type="EMBL" id="AABR03097387">
    <property type="status" value="NOT_ANNOTATED_CDS"/>
    <property type="molecule type" value="Genomic_DNA"/>
</dbReference>
<dbReference type="EMBL" id="AABR03097028">
    <property type="status" value="NOT_ANNOTATED_CDS"/>
    <property type="molecule type" value="Genomic_DNA"/>
</dbReference>
<dbReference type="EMBL" id="AW918423">
    <property type="status" value="NOT_ANNOTATED_CDS"/>
    <property type="molecule type" value="mRNA"/>
</dbReference>
<dbReference type="EMBL" id="AW918455">
    <property type="status" value="NOT_ANNOTATED_CDS"/>
    <property type="molecule type" value="mRNA"/>
</dbReference>
<dbReference type="RefSeq" id="NP_001101838.1">
    <property type="nucleotide sequence ID" value="NM_001108368.1"/>
</dbReference>
<dbReference type="RefSeq" id="XP_006251709.1">
    <property type="nucleotide sequence ID" value="XM_006251647.3"/>
</dbReference>
<dbReference type="RefSeq" id="XP_017455221.1">
    <property type="nucleotide sequence ID" value="XM_017599732.3"/>
</dbReference>
<dbReference type="RefSeq" id="XP_063130436.1">
    <property type="nucleotide sequence ID" value="XM_063274366.1"/>
</dbReference>
<dbReference type="SMR" id="P0C595"/>
<dbReference type="FunCoup" id="P0C595">
    <property type="interactions" value="103"/>
</dbReference>
<dbReference type="STRING" id="10116.ENSRNOP00000017483"/>
<dbReference type="iPTMnet" id="P0C595"/>
<dbReference type="PhosphoSitePlus" id="P0C595"/>
<dbReference type="PaxDb" id="10116-ENSRNOP00000017483"/>
<dbReference type="Ensembl" id="ENSRNOT00000017483.6">
    <property type="protein sequence ID" value="ENSRNOP00000017483.3"/>
    <property type="gene ID" value="ENSRNOG00000013034.6"/>
</dbReference>
<dbReference type="GeneID" id="361003"/>
<dbReference type="KEGG" id="rno:361003"/>
<dbReference type="UCSC" id="RGD:1310229">
    <property type="organism name" value="rat"/>
</dbReference>
<dbReference type="AGR" id="RGD:1310229"/>
<dbReference type="CTD" id="338599"/>
<dbReference type="RGD" id="1310229">
    <property type="gene designation" value="Dusp29"/>
</dbReference>
<dbReference type="eggNOG" id="KOG1716">
    <property type="taxonomic scope" value="Eukaryota"/>
</dbReference>
<dbReference type="GeneTree" id="ENSGT00940000160190"/>
<dbReference type="HOGENOM" id="CLU_027074_11_3_1"/>
<dbReference type="InParanoid" id="P0C595"/>
<dbReference type="OMA" id="NAAHGQR"/>
<dbReference type="OrthoDB" id="10252009at2759"/>
<dbReference type="PhylomeDB" id="P0C595"/>
<dbReference type="TreeFam" id="TF105128"/>
<dbReference type="PRO" id="PR:P0C595"/>
<dbReference type="Proteomes" id="UP000002494">
    <property type="component" value="Chromosome 15"/>
</dbReference>
<dbReference type="Bgee" id="ENSRNOG00000013034">
    <property type="expression patterns" value="Expressed in quadriceps femoris and 5 other cell types or tissues"/>
</dbReference>
<dbReference type="GO" id="GO:0005737">
    <property type="term" value="C:cytoplasm"/>
    <property type="evidence" value="ECO:0000250"/>
    <property type="project" value="UniProtKB"/>
</dbReference>
<dbReference type="GO" id="GO:0005634">
    <property type="term" value="C:nucleus"/>
    <property type="evidence" value="ECO:0000250"/>
    <property type="project" value="UniProtKB"/>
</dbReference>
<dbReference type="GO" id="GO:0032991">
    <property type="term" value="C:protein-containing complex"/>
    <property type="evidence" value="ECO:0000266"/>
    <property type="project" value="RGD"/>
</dbReference>
<dbReference type="GO" id="GO:0033549">
    <property type="term" value="F:MAP kinase phosphatase activity"/>
    <property type="evidence" value="ECO:0000250"/>
    <property type="project" value="UniProtKB"/>
</dbReference>
<dbReference type="GO" id="GO:0042803">
    <property type="term" value="F:protein homodimerization activity"/>
    <property type="evidence" value="ECO:0000266"/>
    <property type="project" value="RGD"/>
</dbReference>
<dbReference type="GO" id="GO:0004722">
    <property type="term" value="F:protein serine/threonine phosphatase activity"/>
    <property type="evidence" value="ECO:0007669"/>
    <property type="project" value="UniProtKB-EC"/>
</dbReference>
<dbReference type="GO" id="GO:0004725">
    <property type="term" value="F:protein tyrosine phosphatase activity"/>
    <property type="evidence" value="ECO:0007669"/>
    <property type="project" value="UniProtKB-EC"/>
</dbReference>
<dbReference type="GO" id="GO:0008138">
    <property type="term" value="F:protein tyrosine/serine/threonine phosphatase activity"/>
    <property type="evidence" value="ECO:0000250"/>
    <property type="project" value="UniProtKB"/>
</dbReference>
<dbReference type="GO" id="GO:0042593">
    <property type="term" value="P:glucose homeostasis"/>
    <property type="evidence" value="ECO:0000266"/>
    <property type="project" value="RGD"/>
</dbReference>
<dbReference type="GO" id="GO:0042692">
    <property type="term" value="P:muscle cell differentiation"/>
    <property type="evidence" value="ECO:0000250"/>
    <property type="project" value="UniProtKB"/>
</dbReference>
<dbReference type="GO" id="GO:0070373">
    <property type="term" value="P:negative regulation of ERK1 and ERK2 cascade"/>
    <property type="evidence" value="ECO:0000250"/>
    <property type="project" value="UniProtKB"/>
</dbReference>
<dbReference type="GO" id="GO:0043409">
    <property type="term" value="P:negative regulation of MAPK cascade"/>
    <property type="evidence" value="ECO:0000318"/>
    <property type="project" value="GO_Central"/>
</dbReference>
<dbReference type="GO" id="GO:0006470">
    <property type="term" value="P:protein dephosphorylation"/>
    <property type="evidence" value="ECO:0000250"/>
    <property type="project" value="UniProtKB"/>
</dbReference>
<dbReference type="CDD" id="cd14575">
    <property type="entry name" value="DUPD1"/>
    <property type="match status" value="1"/>
</dbReference>
<dbReference type="FunFam" id="3.90.190.10:FF:000037">
    <property type="entry name" value="dual specificity protein phosphatase 26"/>
    <property type="match status" value="1"/>
</dbReference>
<dbReference type="Gene3D" id="3.90.190.10">
    <property type="entry name" value="Protein tyrosine phosphatase superfamily"/>
    <property type="match status" value="1"/>
</dbReference>
<dbReference type="InterPro" id="IPR020405">
    <property type="entry name" value="Atypical_DUSP_subfamA"/>
</dbReference>
<dbReference type="InterPro" id="IPR000340">
    <property type="entry name" value="Dual-sp_phosphatase_cat-dom"/>
</dbReference>
<dbReference type="InterPro" id="IPR029021">
    <property type="entry name" value="Prot-tyrosine_phosphatase-like"/>
</dbReference>
<dbReference type="InterPro" id="IPR016130">
    <property type="entry name" value="Tyr_Pase_AS"/>
</dbReference>
<dbReference type="InterPro" id="IPR000387">
    <property type="entry name" value="Tyr_Pase_dom"/>
</dbReference>
<dbReference type="InterPro" id="IPR020422">
    <property type="entry name" value="TYR_PHOSPHATASE_DUAL_dom"/>
</dbReference>
<dbReference type="PANTHER" id="PTHR45682">
    <property type="entry name" value="AGAP008228-PA"/>
    <property type="match status" value="1"/>
</dbReference>
<dbReference type="PANTHER" id="PTHR45682:SF6">
    <property type="entry name" value="DUAL SPECIFICITY PHOSPHATASE 29"/>
    <property type="match status" value="1"/>
</dbReference>
<dbReference type="Pfam" id="PF00782">
    <property type="entry name" value="DSPc"/>
    <property type="match status" value="1"/>
</dbReference>
<dbReference type="PRINTS" id="PR01908">
    <property type="entry name" value="ADSPHPHTASE"/>
</dbReference>
<dbReference type="PRINTS" id="PR01909">
    <property type="entry name" value="ADSPHPHTASEA"/>
</dbReference>
<dbReference type="SMART" id="SM00195">
    <property type="entry name" value="DSPc"/>
    <property type="match status" value="1"/>
</dbReference>
<dbReference type="SUPFAM" id="SSF52799">
    <property type="entry name" value="(Phosphotyrosine protein) phosphatases II"/>
    <property type="match status" value="1"/>
</dbReference>
<dbReference type="PROSITE" id="PS00383">
    <property type="entry name" value="TYR_PHOSPHATASE_1"/>
    <property type="match status" value="1"/>
</dbReference>
<dbReference type="PROSITE" id="PS50056">
    <property type="entry name" value="TYR_PHOSPHATASE_2"/>
    <property type="match status" value="1"/>
</dbReference>
<dbReference type="PROSITE" id="PS50054">
    <property type="entry name" value="TYR_PHOSPHATASE_DUAL"/>
    <property type="match status" value="1"/>
</dbReference>
<sequence>MASGDTKTSVKHAHPCAERLSLQQEEGEAEDYCTPGAFELERLFWKGSPQYTHVNEVWPRLHVGDEATALDRYGLQKAGFTHVLNAAHGRWNVDTGPDYYRDMAIEYHGVEADDVPTFDLSIFFYSAAAFIDSALQDDHSKILVHCAMGRSRSATLVLAYLMIHKNMTLVDAIQQVAKNRCVLPNRGFLKQLRELDKQLVKQRRQAGPGAGELGL</sequence>
<comment type="function">
    <text evidence="1 2">Dual specificity phosphatase able to dephosphorylate phosphotyrosine, phosphoserine and phosphothreonine residues within the same substrate, with a preference for phosphotyrosine as a substrate (By similarity). Involved in the modulation of intracellular signaling cascades. In skeletal muscle regulates systemic glucose homeostasis by activating, AMPK, an energy sensor protein kinase. Affects MAP kinase signaling though modulation of the MAPK1/2 cascade in skeletal muscle promoting muscle cell differentiation, development and atrophy (By similarity).</text>
</comment>
<comment type="catalytic activity">
    <reaction evidence="1">
        <text>O-phospho-L-tyrosyl-[protein] + H2O = L-tyrosyl-[protein] + phosphate</text>
        <dbReference type="Rhea" id="RHEA:10684"/>
        <dbReference type="Rhea" id="RHEA-COMP:10136"/>
        <dbReference type="Rhea" id="RHEA-COMP:20101"/>
        <dbReference type="ChEBI" id="CHEBI:15377"/>
        <dbReference type="ChEBI" id="CHEBI:43474"/>
        <dbReference type="ChEBI" id="CHEBI:46858"/>
        <dbReference type="ChEBI" id="CHEBI:61978"/>
        <dbReference type="EC" id="3.1.3.48"/>
    </reaction>
</comment>
<comment type="catalytic activity">
    <reaction evidence="1">
        <text>O-phospho-L-seryl-[protein] + H2O = L-seryl-[protein] + phosphate</text>
        <dbReference type="Rhea" id="RHEA:20629"/>
        <dbReference type="Rhea" id="RHEA-COMP:9863"/>
        <dbReference type="Rhea" id="RHEA-COMP:11604"/>
        <dbReference type="ChEBI" id="CHEBI:15377"/>
        <dbReference type="ChEBI" id="CHEBI:29999"/>
        <dbReference type="ChEBI" id="CHEBI:43474"/>
        <dbReference type="ChEBI" id="CHEBI:83421"/>
        <dbReference type="EC" id="3.1.3.16"/>
    </reaction>
</comment>
<comment type="catalytic activity">
    <reaction evidence="1">
        <text>O-phospho-L-threonyl-[protein] + H2O = L-threonyl-[protein] + phosphate</text>
        <dbReference type="Rhea" id="RHEA:47004"/>
        <dbReference type="Rhea" id="RHEA-COMP:11060"/>
        <dbReference type="Rhea" id="RHEA-COMP:11605"/>
        <dbReference type="ChEBI" id="CHEBI:15377"/>
        <dbReference type="ChEBI" id="CHEBI:30013"/>
        <dbReference type="ChEBI" id="CHEBI:43474"/>
        <dbReference type="ChEBI" id="CHEBI:61977"/>
        <dbReference type="EC" id="3.1.3.16"/>
    </reaction>
</comment>
<comment type="subunit">
    <text evidence="1 2">Homodimer (By similarity). Interacts with PRKAA2 (By similarity).</text>
</comment>
<comment type="subcellular location">
    <subcellularLocation>
        <location evidence="1">Cytoplasm</location>
    </subcellularLocation>
    <subcellularLocation>
        <location evidence="2">Nucleus</location>
    </subcellularLocation>
</comment>
<comment type="similarity">
    <text evidence="4">Belongs to the protein-tyrosine phosphatase family. Non-receptor class dual specificity subfamily.</text>
</comment>